<accession>Q8T5Z7</accession>
<accession>Q54DT0</accession>
<accession>Q94479</accession>
<organism>
    <name type="scientific">Dictyostelium discoideum</name>
    <name type="common">Social amoeba</name>
    <dbReference type="NCBI Taxonomy" id="44689"/>
    <lineage>
        <taxon>Eukaryota</taxon>
        <taxon>Amoebozoa</taxon>
        <taxon>Evosea</taxon>
        <taxon>Eumycetozoa</taxon>
        <taxon>Dictyostelia</taxon>
        <taxon>Dictyosteliales</taxon>
        <taxon>Dictyosteliaceae</taxon>
        <taxon>Dictyostelium</taxon>
    </lineage>
</organism>
<feature type="chain" id="PRO_0000363833" description="ABC transporter A family member 1">
    <location>
        <begin position="1"/>
        <end position="877"/>
    </location>
</feature>
<feature type="transmembrane region" description="Helical" evidence="1">
    <location>
        <begin position="46"/>
        <end position="66"/>
    </location>
</feature>
<feature type="transmembrane region" description="Helical" evidence="1">
    <location>
        <begin position="268"/>
        <end position="288"/>
    </location>
</feature>
<feature type="transmembrane region" description="Helical" evidence="1">
    <location>
        <begin position="324"/>
        <end position="344"/>
    </location>
</feature>
<feature type="transmembrane region" description="Helical" evidence="1">
    <location>
        <begin position="347"/>
        <end position="367"/>
    </location>
</feature>
<feature type="transmembrane region" description="Helical" evidence="1">
    <location>
        <begin position="379"/>
        <end position="399"/>
    </location>
</feature>
<feature type="transmembrane region" description="Helical" evidence="1">
    <location>
        <begin position="420"/>
        <end position="440"/>
    </location>
</feature>
<feature type="transmembrane region" description="Helical" evidence="1">
    <location>
        <begin position="479"/>
        <end position="499"/>
    </location>
</feature>
<feature type="domain" description="ABC transporter" evidence="2">
    <location>
        <begin position="552"/>
        <end position="788"/>
    </location>
</feature>
<feature type="binding site" evidence="2">
    <location>
        <begin position="591"/>
        <end position="598"/>
    </location>
    <ligand>
        <name>ATP</name>
        <dbReference type="ChEBI" id="CHEBI:30616"/>
    </ligand>
</feature>
<gene>
    <name type="primary">abcA1</name>
    <name type="synonym">abcA</name>
    <name type="ORF">DDB_G0291994</name>
</gene>
<sequence length="877" mass="97375">MSTYSRYNDEDEIRNNKISFGDNIKREFLHLKLLLKKNLLVSIRSYFSTGIEILSPIAFIIILFLISHFGSGNENPIVTYNQELPICKSYGENRCFNIMFSPSNSPSAIAIMEMLGEINNNSIYSYPSDTGYLPDLNNTIGLKGGLIMMNSIEDSFEFVLAHPNVTIAAVDFLSIPLGFQINGAPPKNEPLLKMDGNSLEFNVVVNTTCPNILATCPDYSIAITTAIEKAVITYYSQKIRNEKIPPPTISYGSNAFPRYPPEQGAARVWGGLFYYCGSMISFIFLLYKVSFEKENKLKQGMVMMGLSVNQYWISWFITSFTIDILISLITIIVGLACQLPFFLGSNFFVLIITFSLFTISMSSVAFFLLTFIQSTKSAIGIGMGIFIVGSIFQLVFSGMGTMIFELIYQTNSNGALAARIILFFIPMFHFTKVLTDIGNVTTNYPLLTYKFSDLSTDLNIGGTVLKTVIPTTGQSICYLLALIGVYTVLAWYFEHIIPGNDGTSSPPWFFVLPSYWGLSLKKVRHIPTPYFDDEDVRAAITKAHDASNRAPLIICGLSKSYTKLFRPKKTVHAVKYLSLSVEKGTILGFLGSNGCGKSTTIGMLTGLLEPTAGDALVYGHSVISNIAAVRRITSVVPQHDILWAEMTAREHLQLFSELKGIPAQERESQIQKVLDQVRLSKISNNLISTYSGGMKRRLSVAIACIGDPKIIFMDEPTTGVDPSSKRHLIDLVKSIKNDKVIILTSHDMHEVEILADKIVIMNEGVMACNGNSLQLKSKYGEGYSVNIVAKSPESIPAVVEFVTLSIPGCKFMKQSALQLNFGFPVTIDHQIIANFFKQLEEITNDPNNQLMRDWSVSHSTLDDVFLKVSHLAKLKTQ</sequence>
<name>ABCA1_DICDI</name>
<protein>
    <recommendedName>
        <fullName>ABC transporter A family member 1</fullName>
    </recommendedName>
    <alternativeName>
        <fullName>ABC transporter ABCA.1</fullName>
    </alternativeName>
</protein>
<reference key="1">
    <citation type="journal article" date="2002" name="Eukaryot. Cell">
        <title>Evolutionary analyses of ABC transporters of Dictyostelium discoideum.</title>
        <authorList>
            <person name="Anjard C."/>
            <person name="Loomis W.F."/>
        </authorList>
    </citation>
    <scope>NUCLEOTIDE SEQUENCE [GENOMIC DNA]</scope>
    <scope>NOMENCLATURE</scope>
    <source>
        <strain>AX4</strain>
    </source>
</reference>
<reference key="2">
    <citation type="journal article" date="2005" name="Nature">
        <title>The genome of the social amoeba Dictyostelium discoideum.</title>
        <authorList>
            <person name="Eichinger L."/>
            <person name="Pachebat J.A."/>
            <person name="Gloeckner G."/>
            <person name="Rajandream M.A."/>
            <person name="Sucgang R."/>
            <person name="Berriman M."/>
            <person name="Song J."/>
            <person name="Olsen R."/>
            <person name="Szafranski K."/>
            <person name="Xu Q."/>
            <person name="Tunggal B."/>
            <person name="Kummerfeld S."/>
            <person name="Madera M."/>
            <person name="Konfortov B.A."/>
            <person name="Rivero F."/>
            <person name="Bankier A.T."/>
            <person name="Lehmann R."/>
            <person name="Hamlin N."/>
            <person name="Davies R."/>
            <person name="Gaudet P."/>
            <person name="Fey P."/>
            <person name="Pilcher K."/>
            <person name="Chen G."/>
            <person name="Saunders D."/>
            <person name="Sodergren E.J."/>
            <person name="Davis P."/>
            <person name="Kerhornou A."/>
            <person name="Nie X."/>
            <person name="Hall N."/>
            <person name="Anjard C."/>
            <person name="Hemphill L."/>
            <person name="Bason N."/>
            <person name="Farbrother P."/>
            <person name="Desany B."/>
            <person name="Just E."/>
            <person name="Morio T."/>
            <person name="Rost R."/>
            <person name="Churcher C.M."/>
            <person name="Cooper J."/>
            <person name="Haydock S."/>
            <person name="van Driessche N."/>
            <person name="Cronin A."/>
            <person name="Goodhead I."/>
            <person name="Muzny D.M."/>
            <person name="Mourier T."/>
            <person name="Pain A."/>
            <person name="Lu M."/>
            <person name="Harper D."/>
            <person name="Lindsay R."/>
            <person name="Hauser H."/>
            <person name="James K.D."/>
            <person name="Quiles M."/>
            <person name="Madan Babu M."/>
            <person name="Saito T."/>
            <person name="Buchrieser C."/>
            <person name="Wardroper A."/>
            <person name="Felder M."/>
            <person name="Thangavelu M."/>
            <person name="Johnson D."/>
            <person name="Knights A."/>
            <person name="Loulseged H."/>
            <person name="Mungall K.L."/>
            <person name="Oliver K."/>
            <person name="Price C."/>
            <person name="Quail M.A."/>
            <person name="Urushihara H."/>
            <person name="Hernandez J."/>
            <person name="Rabbinowitsch E."/>
            <person name="Steffen D."/>
            <person name="Sanders M."/>
            <person name="Ma J."/>
            <person name="Kohara Y."/>
            <person name="Sharp S."/>
            <person name="Simmonds M.N."/>
            <person name="Spiegler S."/>
            <person name="Tivey A."/>
            <person name="Sugano S."/>
            <person name="White B."/>
            <person name="Walker D."/>
            <person name="Woodward J.R."/>
            <person name="Winckler T."/>
            <person name="Tanaka Y."/>
            <person name="Shaulsky G."/>
            <person name="Schleicher M."/>
            <person name="Weinstock G.M."/>
            <person name="Rosenthal A."/>
            <person name="Cox E.C."/>
            <person name="Chisholm R.L."/>
            <person name="Gibbs R.A."/>
            <person name="Loomis W.F."/>
            <person name="Platzer M."/>
            <person name="Kay R.R."/>
            <person name="Williams J.G."/>
            <person name="Dear P.H."/>
            <person name="Noegel A.A."/>
            <person name="Barrell B.G."/>
            <person name="Kuspa A."/>
        </authorList>
    </citation>
    <scope>NUCLEOTIDE SEQUENCE [LARGE SCALE GENOMIC DNA]</scope>
    <source>
        <strain>AX4</strain>
    </source>
</reference>
<reference key="3">
    <citation type="submission" date="1996-08" db="EMBL/GenBank/DDBJ databases">
        <authorList>
            <person name="Loomis W.F."/>
        </authorList>
    </citation>
    <scope>NUCLEOTIDE SEQUENCE [MRNA] OF 174-828</scope>
    <source>
        <strain>AX4</strain>
    </source>
</reference>
<dbReference type="EMBL" id="AF491005">
    <property type="protein sequence ID" value="AAL99041.1"/>
    <property type="molecule type" value="Genomic_DNA"/>
</dbReference>
<dbReference type="EMBL" id="AAFI02000187">
    <property type="protein sequence ID" value="EAL61353.1"/>
    <property type="molecule type" value="Genomic_DNA"/>
</dbReference>
<dbReference type="EMBL" id="U66526">
    <property type="protein sequence ID" value="AAB06789.2"/>
    <property type="molecule type" value="mRNA"/>
</dbReference>
<dbReference type="PIR" id="T18288">
    <property type="entry name" value="T18288"/>
</dbReference>
<dbReference type="RefSeq" id="XP_629792.1">
    <property type="nucleotide sequence ID" value="XM_629790.1"/>
</dbReference>
<dbReference type="SMR" id="Q8T5Z7"/>
<dbReference type="FunCoup" id="Q8T5Z7">
    <property type="interactions" value="153"/>
</dbReference>
<dbReference type="STRING" id="44689.Q8T5Z7"/>
<dbReference type="TCDB" id="3.A.1.211.7">
    <property type="family name" value="the atp-binding cassette (abc) superfamily"/>
</dbReference>
<dbReference type="PaxDb" id="44689-DDB0191222"/>
<dbReference type="EnsemblProtists" id="EAL61353">
    <property type="protein sequence ID" value="EAL61353"/>
    <property type="gene ID" value="DDB_G0291994"/>
</dbReference>
<dbReference type="GeneID" id="8628469"/>
<dbReference type="KEGG" id="ddi:DDB_G0291994"/>
<dbReference type="dictyBase" id="DDB_G0291994">
    <property type="gene designation" value="abcA1"/>
</dbReference>
<dbReference type="VEuPathDB" id="AmoebaDB:DDB_G0291994"/>
<dbReference type="eggNOG" id="KOG0059">
    <property type="taxonomic scope" value="Eukaryota"/>
</dbReference>
<dbReference type="HOGENOM" id="CLU_000604_19_5_1"/>
<dbReference type="InParanoid" id="Q8T5Z7"/>
<dbReference type="OMA" id="LAWYFEH"/>
<dbReference type="PhylomeDB" id="Q8T5Z7"/>
<dbReference type="PRO" id="PR:Q8T5Z7"/>
<dbReference type="Proteomes" id="UP000002195">
    <property type="component" value="Chromosome 6"/>
</dbReference>
<dbReference type="GO" id="GO:0043231">
    <property type="term" value="C:intracellular membrane-bounded organelle"/>
    <property type="evidence" value="ECO:0000318"/>
    <property type="project" value="GO_Central"/>
</dbReference>
<dbReference type="GO" id="GO:0016020">
    <property type="term" value="C:membrane"/>
    <property type="evidence" value="ECO:0007669"/>
    <property type="project" value="UniProtKB-SubCell"/>
</dbReference>
<dbReference type="GO" id="GO:0140359">
    <property type="term" value="F:ABC-type transporter activity"/>
    <property type="evidence" value="ECO:0007669"/>
    <property type="project" value="InterPro"/>
</dbReference>
<dbReference type="GO" id="GO:0005524">
    <property type="term" value="F:ATP binding"/>
    <property type="evidence" value="ECO:0007669"/>
    <property type="project" value="UniProtKB-KW"/>
</dbReference>
<dbReference type="GO" id="GO:0016887">
    <property type="term" value="F:ATP hydrolysis activity"/>
    <property type="evidence" value="ECO:0007669"/>
    <property type="project" value="InterPro"/>
</dbReference>
<dbReference type="GO" id="GO:0042626">
    <property type="term" value="F:ATPase-coupled transmembrane transporter activity"/>
    <property type="evidence" value="ECO:0000318"/>
    <property type="project" value="GO_Central"/>
</dbReference>
<dbReference type="GO" id="GO:0005319">
    <property type="term" value="F:lipid transporter activity"/>
    <property type="evidence" value="ECO:0000318"/>
    <property type="project" value="GO_Central"/>
</dbReference>
<dbReference type="GO" id="GO:0006869">
    <property type="term" value="P:lipid transport"/>
    <property type="evidence" value="ECO:0000318"/>
    <property type="project" value="GO_Central"/>
</dbReference>
<dbReference type="CDD" id="cd03263">
    <property type="entry name" value="ABC_subfamily_A"/>
    <property type="match status" value="1"/>
</dbReference>
<dbReference type="FunFam" id="3.40.50.300:FF:000665">
    <property type="entry name" value="ABC transporter A family member 2"/>
    <property type="match status" value="1"/>
</dbReference>
<dbReference type="Gene3D" id="3.40.50.300">
    <property type="entry name" value="P-loop containing nucleotide triphosphate hydrolases"/>
    <property type="match status" value="1"/>
</dbReference>
<dbReference type="InterPro" id="IPR003593">
    <property type="entry name" value="AAA+_ATPase"/>
</dbReference>
<dbReference type="InterPro" id="IPR013525">
    <property type="entry name" value="ABC2_TM"/>
</dbReference>
<dbReference type="InterPro" id="IPR003439">
    <property type="entry name" value="ABC_transporter-like_ATP-bd"/>
</dbReference>
<dbReference type="InterPro" id="IPR026082">
    <property type="entry name" value="ABCA"/>
</dbReference>
<dbReference type="InterPro" id="IPR027417">
    <property type="entry name" value="P-loop_NTPase"/>
</dbReference>
<dbReference type="PANTHER" id="PTHR19229:SF205">
    <property type="entry name" value="ABC TRANSPORTER A FAMILY MEMBER 1-RELATED"/>
    <property type="match status" value="1"/>
</dbReference>
<dbReference type="PANTHER" id="PTHR19229">
    <property type="entry name" value="ATP-BINDING CASSETTE TRANSPORTER SUBFAMILY A ABCA"/>
    <property type="match status" value="1"/>
</dbReference>
<dbReference type="Pfam" id="PF12698">
    <property type="entry name" value="ABC2_membrane_3"/>
    <property type="match status" value="1"/>
</dbReference>
<dbReference type="Pfam" id="PF00005">
    <property type="entry name" value="ABC_tran"/>
    <property type="match status" value="1"/>
</dbReference>
<dbReference type="SMART" id="SM00382">
    <property type="entry name" value="AAA"/>
    <property type="match status" value="1"/>
</dbReference>
<dbReference type="SUPFAM" id="SSF52540">
    <property type="entry name" value="P-loop containing nucleoside triphosphate hydrolases"/>
    <property type="match status" value="1"/>
</dbReference>
<dbReference type="PROSITE" id="PS50893">
    <property type="entry name" value="ABC_TRANSPORTER_2"/>
    <property type="match status" value="1"/>
</dbReference>
<comment type="subcellular location">
    <subcellularLocation>
        <location evidence="3">Membrane</location>
        <topology evidence="3">Multi-pass membrane protein</topology>
    </subcellularLocation>
</comment>
<comment type="similarity">
    <text evidence="3">Belongs to the ABC transporter superfamily. ABCA family.</text>
</comment>
<proteinExistence type="evidence at transcript level"/>
<keyword id="KW-0067">ATP-binding</keyword>
<keyword id="KW-0472">Membrane</keyword>
<keyword id="KW-0547">Nucleotide-binding</keyword>
<keyword id="KW-1185">Reference proteome</keyword>
<keyword id="KW-0812">Transmembrane</keyword>
<keyword id="KW-1133">Transmembrane helix</keyword>
<keyword id="KW-0813">Transport</keyword>
<evidence type="ECO:0000255" key="1"/>
<evidence type="ECO:0000255" key="2">
    <source>
        <dbReference type="PROSITE-ProRule" id="PRU00434"/>
    </source>
</evidence>
<evidence type="ECO:0000305" key="3"/>